<proteinExistence type="inferred from homology"/>
<evidence type="ECO:0000255" key="1">
    <source>
        <dbReference type="HAMAP-Rule" id="MF_01364"/>
    </source>
</evidence>
<evidence type="ECO:0000305" key="2"/>
<reference key="1">
    <citation type="journal article" date="2015" name="Genome Announc.">
        <title>Complete genome sequence of Anaeromyxobacter sp. Fw109-5, an anaerobic, metal-reducing bacterium isolated from a contaminated subsurface environment.</title>
        <authorList>
            <person name="Hwang C."/>
            <person name="Copeland A."/>
            <person name="Lucas S."/>
            <person name="Lapidus A."/>
            <person name="Barry K."/>
            <person name="Glavina Del Rio T."/>
            <person name="Dalin E."/>
            <person name="Tice H."/>
            <person name="Pitluck S."/>
            <person name="Sims D."/>
            <person name="Brettin T."/>
            <person name="Bruce D.C."/>
            <person name="Detter J.C."/>
            <person name="Han C.S."/>
            <person name="Schmutz J."/>
            <person name="Larimer F.W."/>
            <person name="Land M.L."/>
            <person name="Hauser L.J."/>
            <person name="Kyrpides N."/>
            <person name="Lykidis A."/>
            <person name="Richardson P."/>
            <person name="Belieav A."/>
            <person name="Sanford R.A."/>
            <person name="Loeffler F.E."/>
            <person name="Fields M.W."/>
        </authorList>
    </citation>
    <scope>NUCLEOTIDE SEQUENCE [LARGE SCALE GENOMIC DNA]</scope>
    <source>
        <strain>Fw109-5</strain>
    </source>
</reference>
<accession>A7HBN1</accession>
<name>RS14Z_ANADF</name>
<comment type="function">
    <text evidence="1">Binds 16S rRNA, required for the assembly of 30S particles and may also be responsible for determining the conformation of the 16S rRNA at the A site.</text>
</comment>
<comment type="cofactor">
    <cofactor evidence="1">
        <name>Zn(2+)</name>
        <dbReference type="ChEBI" id="CHEBI:29105"/>
    </cofactor>
    <text evidence="1">Binds 1 zinc ion per subunit.</text>
</comment>
<comment type="subunit">
    <text evidence="1">Part of the 30S ribosomal subunit. Contacts proteins S3 and S10.</text>
</comment>
<comment type="similarity">
    <text evidence="1">Belongs to the universal ribosomal protein uS14 family. Zinc-binding uS14 subfamily.</text>
</comment>
<sequence length="61" mass="7233">MAKLSKMAQAKRKLKFPVRQYNRCPLCGRPRAFLRKFQMCRLCFRKRALQGEITGVIKSSW</sequence>
<feature type="chain" id="PRO_1000067922" description="Small ribosomal subunit protein uS14">
    <location>
        <begin position="1"/>
        <end position="61"/>
    </location>
</feature>
<feature type="binding site" evidence="1">
    <location>
        <position position="24"/>
    </location>
    <ligand>
        <name>Zn(2+)</name>
        <dbReference type="ChEBI" id="CHEBI:29105"/>
    </ligand>
</feature>
<feature type="binding site" evidence="1">
    <location>
        <position position="27"/>
    </location>
    <ligand>
        <name>Zn(2+)</name>
        <dbReference type="ChEBI" id="CHEBI:29105"/>
    </ligand>
</feature>
<feature type="binding site" evidence="1">
    <location>
        <position position="40"/>
    </location>
    <ligand>
        <name>Zn(2+)</name>
        <dbReference type="ChEBI" id="CHEBI:29105"/>
    </ligand>
</feature>
<feature type="binding site" evidence="1">
    <location>
        <position position="43"/>
    </location>
    <ligand>
        <name>Zn(2+)</name>
        <dbReference type="ChEBI" id="CHEBI:29105"/>
    </ligand>
</feature>
<protein>
    <recommendedName>
        <fullName evidence="1">Small ribosomal subunit protein uS14</fullName>
    </recommendedName>
    <alternativeName>
        <fullName evidence="2">30S ribosomal protein S14 type Z</fullName>
    </alternativeName>
</protein>
<keyword id="KW-0479">Metal-binding</keyword>
<keyword id="KW-1185">Reference proteome</keyword>
<keyword id="KW-0687">Ribonucleoprotein</keyword>
<keyword id="KW-0689">Ribosomal protein</keyword>
<keyword id="KW-0694">RNA-binding</keyword>
<keyword id="KW-0699">rRNA-binding</keyword>
<keyword id="KW-0862">Zinc</keyword>
<organism>
    <name type="scientific">Anaeromyxobacter sp. (strain Fw109-5)</name>
    <dbReference type="NCBI Taxonomy" id="404589"/>
    <lineage>
        <taxon>Bacteria</taxon>
        <taxon>Pseudomonadati</taxon>
        <taxon>Myxococcota</taxon>
        <taxon>Myxococcia</taxon>
        <taxon>Myxococcales</taxon>
        <taxon>Cystobacterineae</taxon>
        <taxon>Anaeromyxobacteraceae</taxon>
        <taxon>Anaeromyxobacter</taxon>
    </lineage>
</organism>
<dbReference type="EMBL" id="CP000769">
    <property type="protein sequence ID" value="ABS26127.1"/>
    <property type="molecule type" value="Genomic_DNA"/>
</dbReference>
<dbReference type="RefSeq" id="WP_012096706.1">
    <property type="nucleotide sequence ID" value="NC_009675.1"/>
</dbReference>
<dbReference type="SMR" id="A7HBN1"/>
<dbReference type="STRING" id="404589.Anae109_1924"/>
<dbReference type="KEGG" id="afw:Anae109_1924"/>
<dbReference type="eggNOG" id="COG0199">
    <property type="taxonomic scope" value="Bacteria"/>
</dbReference>
<dbReference type="HOGENOM" id="CLU_139869_3_0_7"/>
<dbReference type="OrthoDB" id="9810484at2"/>
<dbReference type="Proteomes" id="UP000006382">
    <property type="component" value="Chromosome"/>
</dbReference>
<dbReference type="GO" id="GO:0005737">
    <property type="term" value="C:cytoplasm"/>
    <property type="evidence" value="ECO:0007669"/>
    <property type="project" value="UniProtKB-ARBA"/>
</dbReference>
<dbReference type="GO" id="GO:0015935">
    <property type="term" value="C:small ribosomal subunit"/>
    <property type="evidence" value="ECO:0007669"/>
    <property type="project" value="TreeGrafter"/>
</dbReference>
<dbReference type="GO" id="GO:0019843">
    <property type="term" value="F:rRNA binding"/>
    <property type="evidence" value="ECO:0007669"/>
    <property type="project" value="UniProtKB-UniRule"/>
</dbReference>
<dbReference type="GO" id="GO:0003735">
    <property type="term" value="F:structural constituent of ribosome"/>
    <property type="evidence" value="ECO:0007669"/>
    <property type="project" value="InterPro"/>
</dbReference>
<dbReference type="GO" id="GO:0008270">
    <property type="term" value="F:zinc ion binding"/>
    <property type="evidence" value="ECO:0007669"/>
    <property type="project" value="UniProtKB-UniRule"/>
</dbReference>
<dbReference type="GO" id="GO:0006412">
    <property type="term" value="P:translation"/>
    <property type="evidence" value="ECO:0007669"/>
    <property type="project" value="UniProtKB-UniRule"/>
</dbReference>
<dbReference type="Gene3D" id="4.10.830.10">
    <property type="entry name" value="30s Ribosomal Protein S14, Chain N"/>
    <property type="match status" value="1"/>
</dbReference>
<dbReference type="HAMAP" id="MF_01364_B">
    <property type="entry name" value="Ribosomal_uS14_2_B"/>
    <property type="match status" value="1"/>
</dbReference>
<dbReference type="InterPro" id="IPR001209">
    <property type="entry name" value="Ribosomal_uS14"/>
</dbReference>
<dbReference type="InterPro" id="IPR023053">
    <property type="entry name" value="Ribosomal_uS14_bact"/>
</dbReference>
<dbReference type="InterPro" id="IPR018271">
    <property type="entry name" value="Ribosomal_uS14_CS"/>
</dbReference>
<dbReference type="InterPro" id="IPR043140">
    <property type="entry name" value="Ribosomal_uS14_sf"/>
</dbReference>
<dbReference type="NCBIfam" id="NF005974">
    <property type="entry name" value="PRK08061.1"/>
    <property type="match status" value="1"/>
</dbReference>
<dbReference type="PANTHER" id="PTHR19836">
    <property type="entry name" value="30S RIBOSOMAL PROTEIN S14"/>
    <property type="match status" value="1"/>
</dbReference>
<dbReference type="PANTHER" id="PTHR19836:SF19">
    <property type="entry name" value="SMALL RIBOSOMAL SUBUNIT PROTEIN US14M"/>
    <property type="match status" value="1"/>
</dbReference>
<dbReference type="Pfam" id="PF00253">
    <property type="entry name" value="Ribosomal_S14"/>
    <property type="match status" value="1"/>
</dbReference>
<dbReference type="SUPFAM" id="SSF57716">
    <property type="entry name" value="Glucocorticoid receptor-like (DNA-binding domain)"/>
    <property type="match status" value="1"/>
</dbReference>
<dbReference type="PROSITE" id="PS00527">
    <property type="entry name" value="RIBOSOMAL_S14"/>
    <property type="match status" value="1"/>
</dbReference>
<gene>
    <name evidence="1" type="primary">rpsZ</name>
    <name evidence="1" type="synonym">rpsN</name>
    <name type="ordered locus">Anae109_1924</name>
</gene>